<keyword id="KW-1185">Reference proteome</keyword>
<keyword id="KW-0687">Ribonucleoprotein</keyword>
<keyword id="KW-0689">Ribosomal protein</keyword>
<comment type="similarity">
    <text evidence="1">Belongs to the bacterial ribosomal protein bL32 family.</text>
</comment>
<organism>
    <name type="scientific">Treponema denticola (strain ATCC 35405 / DSM 14222 / CIP 103919 / JCM 8153 / KCTC 15104)</name>
    <dbReference type="NCBI Taxonomy" id="243275"/>
    <lineage>
        <taxon>Bacteria</taxon>
        <taxon>Pseudomonadati</taxon>
        <taxon>Spirochaetota</taxon>
        <taxon>Spirochaetia</taxon>
        <taxon>Spirochaetales</taxon>
        <taxon>Treponemataceae</taxon>
        <taxon>Treponema</taxon>
    </lineage>
</organism>
<reference key="1">
    <citation type="journal article" date="2004" name="Proc. Natl. Acad. Sci. U.S.A.">
        <title>Comparison of the genome of the oral pathogen Treponema denticola with other spirochete genomes.</title>
        <authorList>
            <person name="Seshadri R."/>
            <person name="Myers G.S.A."/>
            <person name="Tettelin H."/>
            <person name="Eisen J.A."/>
            <person name="Heidelberg J.F."/>
            <person name="Dodson R.J."/>
            <person name="Davidsen T.M."/>
            <person name="DeBoy R.T."/>
            <person name="Fouts D.E."/>
            <person name="Haft D.H."/>
            <person name="Selengut J."/>
            <person name="Ren Q."/>
            <person name="Brinkac L.M."/>
            <person name="Madupu R."/>
            <person name="Kolonay J.F."/>
            <person name="Durkin S.A."/>
            <person name="Daugherty S.C."/>
            <person name="Shetty J."/>
            <person name="Shvartsbeyn A."/>
            <person name="Gebregeorgis E."/>
            <person name="Geer K."/>
            <person name="Tsegaye G."/>
            <person name="Malek J.A."/>
            <person name="Ayodeji B."/>
            <person name="Shatsman S."/>
            <person name="McLeod M.P."/>
            <person name="Smajs D."/>
            <person name="Howell J.K."/>
            <person name="Pal S."/>
            <person name="Amin A."/>
            <person name="Vashisth P."/>
            <person name="McNeill T.Z."/>
            <person name="Xiang Q."/>
            <person name="Sodergren E."/>
            <person name="Baca E."/>
            <person name="Weinstock G.M."/>
            <person name="Norris S.J."/>
            <person name="Fraser C.M."/>
            <person name="Paulsen I.T."/>
        </authorList>
    </citation>
    <scope>NUCLEOTIDE SEQUENCE [LARGE SCALE GENOMIC DNA]</scope>
    <source>
        <strain>ATCC 35405 / DSM 14222 / CIP 103919 / JCM 8153 / KCTC 15104</strain>
    </source>
</reference>
<name>RL32_TREDE</name>
<gene>
    <name evidence="1" type="primary">rpmF</name>
    <name type="ordered locus">TDE_1025</name>
</gene>
<accession>Q73NX7</accession>
<protein>
    <recommendedName>
        <fullName evidence="1">Large ribosomal subunit protein bL32</fullName>
    </recommendedName>
    <alternativeName>
        <fullName evidence="2">50S ribosomal protein L32</fullName>
    </alternativeName>
</protein>
<sequence length="62" mass="6935">MAVPRANTSKARTRRRRGVNMRLQAPNLVECSGCGNLIMPHHVCPKCGFYKGKQVINPDKLD</sequence>
<feature type="chain" id="PRO_0000172428" description="Large ribosomal subunit protein bL32">
    <location>
        <begin position="1"/>
        <end position="62"/>
    </location>
</feature>
<proteinExistence type="inferred from homology"/>
<dbReference type="EMBL" id="AE017226">
    <property type="protein sequence ID" value="AAS11514.1"/>
    <property type="molecule type" value="Genomic_DNA"/>
</dbReference>
<dbReference type="RefSeq" id="NP_971633.1">
    <property type="nucleotide sequence ID" value="NC_002967.9"/>
</dbReference>
<dbReference type="RefSeq" id="WP_002670496.1">
    <property type="nucleotide sequence ID" value="NC_002967.9"/>
</dbReference>
<dbReference type="SMR" id="Q73NX7"/>
<dbReference type="STRING" id="243275.TDE_1025"/>
<dbReference type="PaxDb" id="243275-TDE_1025"/>
<dbReference type="GeneID" id="2740965"/>
<dbReference type="KEGG" id="tde:TDE_1025"/>
<dbReference type="PATRIC" id="fig|243275.7.peg.987"/>
<dbReference type="eggNOG" id="COG0333">
    <property type="taxonomic scope" value="Bacteria"/>
</dbReference>
<dbReference type="HOGENOM" id="CLU_129084_1_0_12"/>
<dbReference type="OrthoDB" id="9812874at2"/>
<dbReference type="Proteomes" id="UP000008212">
    <property type="component" value="Chromosome"/>
</dbReference>
<dbReference type="GO" id="GO:0015934">
    <property type="term" value="C:large ribosomal subunit"/>
    <property type="evidence" value="ECO:0007669"/>
    <property type="project" value="InterPro"/>
</dbReference>
<dbReference type="GO" id="GO:0003735">
    <property type="term" value="F:structural constituent of ribosome"/>
    <property type="evidence" value="ECO:0007669"/>
    <property type="project" value="InterPro"/>
</dbReference>
<dbReference type="GO" id="GO:0006412">
    <property type="term" value="P:translation"/>
    <property type="evidence" value="ECO:0007669"/>
    <property type="project" value="UniProtKB-UniRule"/>
</dbReference>
<dbReference type="HAMAP" id="MF_00340">
    <property type="entry name" value="Ribosomal_bL32"/>
    <property type="match status" value="1"/>
</dbReference>
<dbReference type="InterPro" id="IPR002677">
    <property type="entry name" value="Ribosomal_bL32"/>
</dbReference>
<dbReference type="InterPro" id="IPR044957">
    <property type="entry name" value="Ribosomal_bL32_bact"/>
</dbReference>
<dbReference type="InterPro" id="IPR011332">
    <property type="entry name" value="Ribosomal_zn-bd"/>
</dbReference>
<dbReference type="NCBIfam" id="TIGR01031">
    <property type="entry name" value="rpmF_bact"/>
    <property type="match status" value="1"/>
</dbReference>
<dbReference type="PANTHER" id="PTHR35534">
    <property type="entry name" value="50S RIBOSOMAL PROTEIN L32"/>
    <property type="match status" value="1"/>
</dbReference>
<dbReference type="PANTHER" id="PTHR35534:SF1">
    <property type="entry name" value="LARGE RIBOSOMAL SUBUNIT PROTEIN BL32"/>
    <property type="match status" value="1"/>
</dbReference>
<dbReference type="Pfam" id="PF01783">
    <property type="entry name" value="Ribosomal_L32p"/>
    <property type="match status" value="1"/>
</dbReference>
<dbReference type="SUPFAM" id="SSF57829">
    <property type="entry name" value="Zn-binding ribosomal proteins"/>
    <property type="match status" value="1"/>
</dbReference>
<evidence type="ECO:0000255" key="1">
    <source>
        <dbReference type="HAMAP-Rule" id="MF_00340"/>
    </source>
</evidence>
<evidence type="ECO:0000305" key="2"/>